<gene>
    <name type="primary">NFYB9</name>
    <name type="synonym">LEC1</name>
    <name type="ordered locus">At1g21970</name>
    <name type="ORF">T26F17.20</name>
</gene>
<feature type="chain" id="PRO_0000204623" description="Nuclear transcription factor Y subunit B-9">
    <location>
        <begin position="1"/>
        <end position="238"/>
    </location>
</feature>
<feature type="DNA-binding region" evidence="1">
    <location>
        <begin position="64"/>
        <end position="70"/>
    </location>
</feature>
<feature type="region of interest" description="Subunit association domain (SAD)" evidence="1">
    <location>
        <begin position="91"/>
        <end position="102"/>
    </location>
</feature>
<feature type="region of interest" description="Disordered" evidence="2">
    <location>
        <begin position="203"/>
        <end position="238"/>
    </location>
</feature>
<feature type="compositionally biased region" description="Low complexity" evidence="2">
    <location>
        <begin position="208"/>
        <end position="227"/>
    </location>
</feature>
<feature type="mutagenesis site" description="Affects function." evidence="4">
    <original>D</original>
    <variation>K</variation>
    <location>
        <position position="85"/>
    </location>
</feature>
<feature type="sequence conflict" description="In Ref. 4; BX817269." evidence="8" ref="4">
    <original>S</original>
    <variation>T</variation>
    <location>
        <position position="17"/>
    </location>
</feature>
<feature type="sequence conflict" description="In Ref. 5; AAC39488." evidence="8" ref="5">
    <original>V</original>
    <variation>I</variation>
    <location>
        <position position="36"/>
    </location>
</feature>
<organism>
    <name type="scientific">Arabidopsis thaliana</name>
    <name type="common">Mouse-ear cress</name>
    <dbReference type="NCBI Taxonomy" id="3702"/>
    <lineage>
        <taxon>Eukaryota</taxon>
        <taxon>Viridiplantae</taxon>
        <taxon>Streptophyta</taxon>
        <taxon>Embryophyta</taxon>
        <taxon>Tracheophyta</taxon>
        <taxon>Spermatophyta</taxon>
        <taxon>Magnoliopsida</taxon>
        <taxon>eudicotyledons</taxon>
        <taxon>Gunneridae</taxon>
        <taxon>Pentapetalae</taxon>
        <taxon>rosids</taxon>
        <taxon>malvids</taxon>
        <taxon>Brassicales</taxon>
        <taxon>Brassicaceae</taxon>
        <taxon>Camelineae</taxon>
        <taxon>Arabidopsis</taxon>
    </lineage>
</organism>
<dbReference type="EMBL" id="AC013482">
    <property type="protein sequence ID" value="AAF16537.1"/>
    <property type="status" value="ALT_SEQ"/>
    <property type="molecule type" value="Genomic_DNA"/>
</dbReference>
<dbReference type="EMBL" id="CP002684">
    <property type="protein sequence ID" value="AEE30179.1"/>
    <property type="molecule type" value="Genomic_DNA"/>
</dbReference>
<dbReference type="EMBL" id="AB493474">
    <property type="protein sequence ID" value="BAH30312.1"/>
    <property type="molecule type" value="mRNA"/>
</dbReference>
<dbReference type="EMBL" id="BX817269">
    <property type="status" value="NOT_ANNOTATED_CDS"/>
    <property type="molecule type" value="mRNA"/>
</dbReference>
<dbReference type="EMBL" id="AF036684">
    <property type="protein sequence ID" value="AAC39488.1"/>
    <property type="status" value="ALT_INIT"/>
    <property type="molecule type" value="Genomic_DNA"/>
</dbReference>
<dbReference type="PIR" id="G86352">
    <property type="entry name" value="G86352"/>
</dbReference>
<dbReference type="RefSeq" id="NP_173616.2">
    <property type="nucleotide sequence ID" value="NM_102046.5"/>
</dbReference>
<dbReference type="SMR" id="Q9SFD8"/>
<dbReference type="BioGRID" id="24039">
    <property type="interactions" value="17"/>
</dbReference>
<dbReference type="FunCoup" id="Q9SFD8">
    <property type="interactions" value="45"/>
</dbReference>
<dbReference type="IntAct" id="Q9SFD8">
    <property type="interactions" value="7"/>
</dbReference>
<dbReference type="STRING" id="3702.Q9SFD8"/>
<dbReference type="PaxDb" id="3702-AT1G21970.1"/>
<dbReference type="ProteomicsDB" id="251170"/>
<dbReference type="EnsemblPlants" id="AT1G21970.1">
    <property type="protein sequence ID" value="AT1G21970.1"/>
    <property type="gene ID" value="AT1G21970"/>
</dbReference>
<dbReference type="GeneID" id="838800"/>
<dbReference type="Gramene" id="AT1G21970.1">
    <property type="protein sequence ID" value="AT1G21970.1"/>
    <property type="gene ID" value="AT1G21970"/>
</dbReference>
<dbReference type="KEGG" id="ath:AT1G21970"/>
<dbReference type="Araport" id="AT1G21970"/>
<dbReference type="TAIR" id="AT1G21970">
    <property type="gene designation" value="LEC1"/>
</dbReference>
<dbReference type="eggNOG" id="KOG0869">
    <property type="taxonomic scope" value="Eukaryota"/>
</dbReference>
<dbReference type="HOGENOM" id="CLU_066247_4_0_1"/>
<dbReference type="InParanoid" id="Q9SFD8"/>
<dbReference type="OMA" id="HCNAGGA"/>
<dbReference type="OrthoDB" id="386949at2759"/>
<dbReference type="PRO" id="PR:Q9SFD8"/>
<dbReference type="Proteomes" id="UP000006548">
    <property type="component" value="Chromosome 1"/>
</dbReference>
<dbReference type="ExpressionAtlas" id="Q9SFD8">
    <property type="expression patterns" value="baseline and differential"/>
</dbReference>
<dbReference type="GO" id="GO:0016602">
    <property type="term" value="C:CCAAT-binding factor complex"/>
    <property type="evidence" value="ECO:0007669"/>
    <property type="project" value="InterPro"/>
</dbReference>
<dbReference type="GO" id="GO:0003682">
    <property type="term" value="F:chromatin binding"/>
    <property type="evidence" value="ECO:0000314"/>
    <property type="project" value="TAIR"/>
</dbReference>
<dbReference type="GO" id="GO:0001228">
    <property type="term" value="F:DNA-binding transcription activator activity, RNA polymerase II-specific"/>
    <property type="evidence" value="ECO:0007669"/>
    <property type="project" value="InterPro"/>
</dbReference>
<dbReference type="GO" id="GO:0003700">
    <property type="term" value="F:DNA-binding transcription factor activity"/>
    <property type="evidence" value="ECO:0000250"/>
    <property type="project" value="TAIR"/>
</dbReference>
<dbReference type="GO" id="GO:0046982">
    <property type="term" value="F:protein heterodimerization activity"/>
    <property type="evidence" value="ECO:0007669"/>
    <property type="project" value="InterPro"/>
</dbReference>
<dbReference type="GO" id="GO:0043565">
    <property type="term" value="F:sequence-specific DNA binding"/>
    <property type="evidence" value="ECO:0007669"/>
    <property type="project" value="InterPro"/>
</dbReference>
<dbReference type="GO" id="GO:0009738">
    <property type="term" value="P:abscisic acid-activated signaling pathway"/>
    <property type="evidence" value="ECO:0000315"/>
    <property type="project" value="UniProtKB"/>
</dbReference>
<dbReference type="GO" id="GO:0009785">
    <property type="term" value="P:blue light signaling pathway"/>
    <property type="evidence" value="ECO:0000315"/>
    <property type="project" value="UniProtKB"/>
</dbReference>
<dbReference type="GO" id="GO:0009793">
    <property type="term" value="P:embryo development ending in seed dormancy"/>
    <property type="evidence" value="ECO:0000315"/>
    <property type="project" value="TAIR"/>
</dbReference>
<dbReference type="GO" id="GO:0040029">
    <property type="term" value="P:epigenetic regulation of gene expression"/>
    <property type="evidence" value="ECO:0000315"/>
    <property type="project" value="TAIR"/>
</dbReference>
<dbReference type="GO" id="GO:0045893">
    <property type="term" value="P:positive regulation of DNA-templated transcription"/>
    <property type="evidence" value="ECO:0000314"/>
    <property type="project" value="TAIR"/>
</dbReference>
<dbReference type="GO" id="GO:0045723">
    <property type="term" value="P:positive regulation of fatty acid biosynthetic process"/>
    <property type="evidence" value="ECO:0000315"/>
    <property type="project" value="TAIR"/>
</dbReference>
<dbReference type="GO" id="GO:0010262">
    <property type="term" value="P:somatic embryogenesis"/>
    <property type="evidence" value="ECO:0000315"/>
    <property type="project" value="TAIR"/>
</dbReference>
<dbReference type="CDD" id="cd22907">
    <property type="entry name" value="HFD_NFYB"/>
    <property type="match status" value="1"/>
</dbReference>
<dbReference type="FunFam" id="1.10.20.10:FF:000049">
    <property type="entry name" value="Nuclear transcription factor Y subunit B-6"/>
    <property type="match status" value="1"/>
</dbReference>
<dbReference type="Gene3D" id="1.10.20.10">
    <property type="entry name" value="Histone, subunit A"/>
    <property type="match status" value="1"/>
</dbReference>
<dbReference type="InterPro" id="IPR003958">
    <property type="entry name" value="CBFA_NFYB_domain"/>
</dbReference>
<dbReference type="InterPro" id="IPR009072">
    <property type="entry name" value="Histone-fold"/>
</dbReference>
<dbReference type="InterPro" id="IPR027113">
    <property type="entry name" value="Transc_fact_NFYB/HAP3"/>
</dbReference>
<dbReference type="InterPro" id="IPR003956">
    <property type="entry name" value="Transcrpt_fac_NFYB/HAP3_CS"/>
</dbReference>
<dbReference type="PANTHER" id="PTHR11064">
    <property type="entry name" value="CCAAT-BINDING TRANSCRIPTION FACTOR-RELATED"/>
    <property type="match status" value="1"/>
</dbReference>
<dbReference type="PANTHER" id="PTHR11064:SF115">
    <property type="entry name" value="NUCLEAR TRANSCRIPTION FACTOR Y SUBUNIT B-9"/>
    <property type="match status" value="1"/>
</dbReference>
<dbReference type="Pfam" id="PF00808">
    <property type="entry name" value="CBFD_NFYB_HMF"/>
    <property type="match status" value="1"/>
</dbReference>
<dbReference type="PRINTS" id="PR00615">
    <property type="entry name" value="CCAATSUBUNTA"/>
</dbReference>
<dbReference type="SUPFAM" id="SSF47113">
    <property type="entry name" value="Histone-fold"/>
    <property type="match status" value="1"/>
</dbReference>
<dbReference type="PROSITE" id="PS00685">
    <property type="entry name" value="NFYB_HAP3"/>
    <property type="match status" value="1"/>
</dbReference>
<comment type="function">
    <text evidence="4 5 6 7">Component of the NF-Y/HAP transcription factor complex. The NF-Y complex stimulates the transcription of various genes by recognizing and binding to a CCAAT motif in promoters. Acts as a central regulator of the embryogenesis. Required for the speciation of cotyledon identity and the completion of embryo maturation. Controls seed storage protein genes through the regulation of FUS3 and ABI3. Involved in the blue light (BL) and abscisic acid (ABA) signaling pathways.</text>
</comment>
<comment type="subunit">
    <text evidence="1 6">Heterotrimeric transcription factor composed of three components, NF-YA, NF-YB and NF-YC. NF-YB and NF-YC must interact and dimerize for NF-YA association and DNA binding (By similarity). Interacts with PRN1.</text>
</comment>
<comment type="interaction">
    <interactant intactId="EBI-2475789">
        <id>Q9SFD8</id>
    </interactant>
    <interactant intactId="EBI-4446727">
        <id>Q94ID6</id>
        <label>ERF12</label>
    </interactant>
    <organismsDiffer>false</organismsDiffer>
    <experiments>3</experiments>
</comment>
<comment type="interaction">
    <interactant intactId="EBI-2475789">
        <id>Q9SFD8</id>
    </interactant>
    <interactant intactId="EBI-2000137">
        <id>Q9MAI5</id>
        <label>ERF8</label>
    </interactant>
    <organismsDiffer>false</organismsDiffer>
    <experiments>3</experiments>
</comment>
<comment type="interaction">
    <interactant intactId="EBI-2475789">
        <id>Q9SFD8</id>
    </interactant>
    <interactant intactId="EBI-3946459">
        <id>Q9C5X0</id>
        <label>IAA34</label>
    </interactant>
    <organismsDiffer>false</organismsDiffer>
    <experiments>3</experiments>
</comment>
<comment type="subcellular location">
    <subcellularLocation>
        <location evidence="8">Nucleus</location>
    </subcellularLocation>
</comment>
<comment type="tissue specificity">
    <text evidence="3 6">Expressed in green siliques. Present in etiolated seedlings.</text>
</comment>
<comment type="developmental stage">
    <text evidence="7">Accumulates during seed development in embryo cell types and in endosperm tissue.</text>
</comment>
<comment type="disruption phenotype">
    <text evidence="6">Altered response to blue light (BL) and abscisic acid (ABA).</text>
</comment>
<comment type="similarity">
    <text evidence="8">Belongs to the NFYB/HAP3 subunit family.</text>
</comment>
<comment type="sequence caution" evidence="8">
    <conflict type="erroneous initiation">
        <sequence resource="EMBL-CDS" id="AAC39488"/>
    </conflict>
    <text>Truncated N-terminus.</text>
</comment>
<comment type="sequence caution" evidence="8">
    <conflict type="erroneous gene model prediction">
        <sequence resource="EMBL-CDS" id="AAF16537"/>
    </conflict>
</comment>
<reference key="1">
    <citation type="journal article" date="2000" name="Nature">
        <title>Sequence and analysis of chromosome 1 of the plant Arabidopsis thaliana.</title>
        <authorList>
            <person name="Theologis A."/>
            <person name="Ecker J.R."/>
            <person name="Palm C.J."/>
            <person name="Federspiel N.A."/>
            <person name="Kaul S."/>
            <person name="White O."/>
            <person name="Alonso J."/>
            <person name="Altafi H."/>
            <person name="Araujo R."/>
            <person name="Bowman C.L."/>
            <person name="Brooks S.Y."/>
            <person name="Buehler E."/>
            <person name="Chan A."/>
            <person name="Chao Q."/>
            <person name="Chen H."/>
            <person name="Cheuk R.F."/>
            <person name="Chin C.W."/>
            <person name="Chung M.K."/>
            <person name="Conn L."/>
            <person name="Conway A.B."/>
            <person name="Conway A.R."/>
            <person name="Creasy T.H."/>
            <person name="Dewar K."/>
            <person name="Dunn P."/>
            <person name="Etgu P."/>
            <person name="Feldblyum T.V."/>
            <person name="Feng J.-D."/>
            <person name="Fong B."/>
            <person name="Fujii C.Y."/>
            <person name="Gill J.E."/>
            <person name="Goldsmith A.D."/>
            <person name="Haas B."/>
            <person name="Hansen N.F."/>
            <person name="Hughes B."/>
            <person name="Huizar L."/>
            <person name="Hunter J.L."/>
            <person name="Jenkins J."/>
            <person name="Johnson-Hopson C."/>
            <person name="Khan S."/>
            <person name="Khaykin E."/>
            <person name="Kim C.J."/>
            <person name="Koo H.L."/>
            <person name="Kremenetskaia I."/>
            <person name="Kurtz D.B."/>
            <person name="Kwan A."/>
            <person name="Lam B."/>
            <person name="Langin-Hooper S."/>
            <person name="Lee A."/>
            <person name="Lee J.M."/>
            <person name="Lenz C.A."/>
            <person name="Li J.H."/>
            <person name="Li Y.-P."/>
            <person name="Lin X."/>
            <person name="Liu S.X."/>
            <person name="Liu Z.A."/>
            <person name="Luros J.S."/>
            <person name="Maiti R."/>
            <person name="Marziali A."/>
            <person name="Militscher J."/>
            <person name="Miranda M."/>
            <person name="Nguyen M."/>
            <person name="Nierman W.C."/>
            <person name="Osborne B.I."/>
            <person name="Pai G."/>
            <person name="Peterson J."/>
            <person name="Pham P.K."/>
            <person name="Rizzo M."/>
            <person name="Rooney T."/>
            <person name="Rowley D."/>
            <person name="Sakano H."/>
            <person name="Salzberg S.L."/>
            <person name="Schwartz J.R."/>
            <person name="Shinn P."/>
            <person name="Southwick A.M."/>
            <person name="Sun H."/>
            <person name="Tallon L.J."/>
            <person name="Tambunga G."/>
            <person name="Toriumi M.J."/>
            <person name="Town C.D."/>
            <person name="Utterback T."/>
            <person name="Van Aken S."/>
            <person name="Vaysberg M."/>
            <person name="Vysotskaia V.S."/>
            <person name="Walker M."/>
            <person name="Wu D."/>
            <person name="Yu G."/>
            <person name="Fraser C.M."/>
            <person name="Venter J.C."/>
            <person name="Davis R.W."/>
        </authorList>
    </citation>
    <scope>NUCLEOTIDE SEQUENCE [LARGE SCALE GENOMIC DNA]</scope>
    <source>
        <strain>cv. Columbia</strain>
    </source>
</reference>
<reference key="2">
    <citation type="journal article" date="2017" name="Plant J.">
        <title>Araport11: a complete reannotation of the Arabidopsis thaliana reference genome.</title>
        <authorList>
            <person name="Cheng C.Y."/>
            <person name="Krishnakumar V."/>
            <person name="Chan A.P."/>
            <person name="Thibaud-Nissen F."/>
            <person name="Schobel S."/>
            <person name="Town C.D."/>
        </authorList>
    </citation>
    <scope>GENOME REANNOTATION</scope>
    <source>
        <strain>cv. Columbia</strain>
    </source>
</reference>
<reference key="3">
    <citation type="journal article" date="2010" name="Plant Cell Physiol.">
        <title>Efficient yeast one-/two-hybrid screening using a library composed only of transcription factors in Arabidopsis thaliana.</title>
        <authorList>
            <person name="Mitsuda N."/>
            <person name="Ikeda M."/>
            <person name="Takada S."/>
            <person name="Takiguchi Y."/>
            <person name="Kondou Y."/>
            <person name="Yoshizumi T."/>
            <person name="Fujita M."/>
            <person name="Shinozaki K."/>
            <person name="Matsui M."/>
            <person name="Ohme-Takagi M."/>
        </authorList>
    </citation>
    <scope>NUCLEOTIDE SEQUENCE [MRNA] OF 1-235</scope>
</reference>
<reference key="4">
    <citation type="journal article" date="2004" name="Genome Res.">
        <title>Whole genome sequence comparisons and 'full-length' cDNA sequences: a combined approach to evaluate and improve Arabidopsis genome annotation.</title>
        <authorList>
            <person name="Castelli V."/>
            <person name="Aury J.-M."/>
            <person name="Jaillon O."/>
            <person name="Wincker P."/>
            <person name="Clepet C."/>
            <person name="Menard M."/>
            <person name="Cruaud C."/>
            <person name="Quetier F."/>
            <person name="Scarpelli C."/>
            <person name="Schaechter V."/>
            <person name="Temple G."/>
            <person name="Caboche M."/>
            <person name="Weissenbach J."/>
            <person name="Salanoubat M."/>
        </authorList>
    </citation>
    <scope>NUCLEOTIDE SEQUENCE [LARGE SCALE MRNA] OF 17-238</scope>
    <source>
        <strain>cv. Columbia</strain>
    </source>
</reference>
<reference key="5">
    <citation type="journal article" date="1998" name="Cell">
        <title>Arabidopsis LEAFY COTYLEDON1 is sufficient to induce embryo development in vegetative cells.</title>
        <authorList>
            <person name="Lotan T."/>
            <person name="Ohto M.-A."/>
            <person name="Yee K.M."/>
            <person name="West M.A.L."/>
            <person name="Lo R."/>
            <person name="Kwong R.W."/>
            <person name="Yamagishi K."/>
            <person name="Fischer R.L."/>
            <person name="Goldberg R.B."/>
            <person name="Harada J.J."/>
        </authorList>
    </citation>
    <scope>NUCLEOTIDE SEQUENCE [GENOMIC DNA] OF 18-238</scope>
    <scope>FUNCTION</scope>
    <scope>DEVELOPMENTAL STAGE</scope>
    <source>
        <strain>cv. Wassilewskija</strain>
    </source>
</reference>
<reference key="6">
    <citation type="journal article" date="2001" name="Gene">
        <title>Regulation of the CCAAT-binding NF-Y subunits in Arabidopsis thaliana.</title>
        <authorList>
            <person name="Gusmaroli G."/>
            <person name="Tonelli C."/>
            <person name="Mantovani R."/>
        </authorList>
    </citation>
    <scope>TISSUE SPECIFICITY</scope>
</reference>
<reference key="7">
    <citation type="journal article" date="2002" name="Gene">
        <title>Regulation of novel members of the Arabidopsis thaliana CCAAT-binding nuclear factor Y subunits.</title>
        <authorList>
            <person name="Gusmaroli G."/>
            <person name="Tonelli C."/>
            <person name="Mantovani R."/>
        </authorList>
    </citation>
    <scope>GENE FAMILY</scope>
    <scope>NOMENCLATURE</scope>
</reference>
<reference key="8">
    <citation type="journal article" date="2003" name="Proc. Natl. Acad. Sci. U.S.A.">
        <title>Arabidopsis LEAFY COTYLEDON1 represents a functionally specialized subunit of the CCAAT binding transcription factor.</title>
        <authorList>
            <person name="Lee H."/>
            <person name="Fischer R.L."/>
            <person name="Goldberg R.B."/>
            <person name="Harada J.J."/>
        </authorList>
    </citation>
    <scope>FUNCTION</scope>
    <scope>MUTAGENESIS OF ASP-85</scope>
</reference>
<reference key="9">
    <citation type="journal article" date="2005" name="Plant Cell Physiol.">
        <title>LEAFY COTYLEDON1 controls seed storage protein genes through its regulation of FUSCA3 and ABSCISIC ACID INSENSITIVE3.</title>
        <authorList>
            <person name="Kagaya Y."/>
            <person name="Toyoshima R."/>
            <person name="Okuda R."/>
            <person name="Usui H."/>
            <person name="Yamamoto A."/>
            <person name="Hattori T."/>
        </authorList>
    </citation>
    <scope>FUNCTION</scope>
</reference>
<reference key="10">
    <citation type="journal article" date="2007" name="Plant Physiol.">
        <title>The GCR1, GPA1, PRN1, NF-Y signal chain mediates both blue light and abscisic acid responses in Arabidopsis.</title>
        <authorList>
            <person name="Warpeha K.M."/>
            <person name="Upadhyay S."/>
            <person name="Yeh J."/>
            <person name="Adamiak J."/>
            <person name="Hawkins S.I."/>
            <person name="Lapik Y.R."/>
            <person name="Anderson M.B."/>
            <person name="Kaufman L.S."/>
        </authorList>
    </citation>
    <scope>FUNCTION</scope>
    <scope>DISRUPTION PHENOTYPE</scope>
    <scope>TISSUE SPECIFICITY</scope>
    <scope>INTERACTION WITH PRN1</scope>
    <source>
        <strain>cv. Columbia</strain>
        <strain>cv. Wassilewskija</strain>
    </source>
</reference>
<accession>Q9SFD8</accession>
<accession>C0SUX1</accession>
<accession>O81130</accession>
<sequence>MERGAPFSHYQLPKSISELNLDQHSNNPTPMTSSVVVAGAGDKNNGIVVQQQPPCVAREQDQYMPIANVIRIMRKTLPSHAKISDDAKETIQECVSEYISFVTGEANERCQREQRKTITAEDILWAMSKLGFDNYVDPLTVFINRYREIETDRGSALRGEPPSLRQTYGGNGIGFHGPSHGLPPPGPYGYGMLDQSMVMGGGRYYQNGSSGQDESSVGGGSSSSINGMPAFDHYGQYK</sequence>
<keyword id="KW-0938">Abscisic acid signaling pathway</keyword>
<keyword id="KW-0010">Activator</keyword>
<keyword id="KW-0238">DNA-binding</keyword>
<keyword id="KW-0539">Nucleus</keyword>
<keyword id="KW-1185">Reference proteome</keyword>
<keyword id="KW-0804">Transcription</keyword>
<keyword id="KW-0805">Transcription regulation</keyword>
<proteinExistence type="evidence at protein level"/>
<name>NFYB9_ARATH</name>
<evidence type="ECO:0000250" key="1"/>
<evidence type="ECO:0000256" key="2">
    <source>
        <dbReference type="SAM" id="MobiDB-lite"/>
    </source>
</evidence>
<evidence type="ECO:0000269" key="3">
    <source>
    </source>
</evidence>
<evidence type="ECO:0000269" key="4">
    <source>
    </source>
</evidence>
<evidence type="ECO:0000269" key="5">
    <source>
    </source>
</evidence>
<evidence type="ECO:0000269" key="6">
    <source>
    </source>
</evidence>
<evidence type="ECO:0000269" key="7">
    <source>
    </source>
</evidence>
<evidence type="ECO:0000305" key="8"/>
<protein>
    <recommendedName>
        <fullName>Nuclear transcription factor Y subunit B-9</fullName>
        <shortName>AtNF-YB-9</shortName>
    </recommendedName>
    <alternativeName>
        <fullName>Protein LEAFY COTYLEDON 1</fullName>
    </alternativeName>
</protein>